<sequence length="247" mass="28384">MKKLVLLRHGESQWNRENRFTGWVDIDLSEKGREEAKAAGQLLKDEGFVFDMAYASVLKRAIRTLWTVLDQMDLMWIPVTKSWRLNERHYGALQGLNKTETAQRHGDEQVLIWRRSYDTPPPALDADDERHPSKDRRYAALTPEELPATECLKDTVARFLPYWHETIAPQIMDGKRVIITAHGNSLRALVKYLDNISDEDIVGLNIPTGIPLVYELDDDLKPIRSYYLGDQEELKKAQEAVAKQGKA</sequence>
<keyword id="KW-0312">Gluconeogenesis</keyword>
<keyword id="KW-0324">Glycolysis</keyword>
<keyword id="KW-0413">Isomerase</keyword>
<organism>
    <name type="scientific">Chlorobaculum parvum (strain DSM 263 / NCIMB 8327)</name>
    <name type="common">Chlorobium vibrioforme subsp. thiosulfatophilum</name>
    <dbReference type="NCBI Taxonomy" id="517417"/>
    <lineage>
        <taxon>Bacteria</taxon>
        <taxon>Pseudomonadati</taxon>
        <taxon>Chlorobiota</taxon>
        <taxon>Chlorobiia</taxon>
        <taxon>Chlorobiales</taxon>
        <taxon>Chlorobiaceae</taxon>
        <taxon>Chlorobaculum</taxon>
    </lineage>
</organism>
<proteinExistence type="inferred from homology"/>
<evidence type="ECO:0000255" key="1">
    <source>
        <dbReference type="HAMAP-Rule" id="MF_01039"/>
    </source>
</evidence>
<dbReference type="EC" id="5.4.2.11" evidence="1"/>
<dbReference type="EMBL" id="CP001099">
    <property type="protein sequence ID" value="ACF11891.1"/>
    <property type="molecule type" value="Genomic_DNA"/>
</dbReference>
<dbReference type="RefSeq" id="WP_012502724.1">
    <property type="nucleotide sequence ID" value="NC_011027.1"/>
</dbReference>
<dbReference type="SMR" id="B3QPN8"/>
<dbReference type="STRING" id="517417.Cpar_1493"/>
<dbReference type="KEGG" id="cpc:Cpar_1493"/>
<dbReference type="eggNOG" id="COG0588">
    <property type="taxonomic scope" value="Bacteria"/>
</dbReference>
<dbReference type="HOGENOM" id="CLU_033323_1_1_10"/>
<dbReference type="OrthoDB" id="9782128at2"/>
<dbReference type="UniPathway" id="UPA00109">
    <property type="reaction ID" value="UER00186"/>
</dbReference>
<dbReference type="Proteomes" id="UP000008811">
    <property type="component" value="Chromosome"/>
</dbReference>
<dbReference type="GO" id="GO:0004619">
    <property type="term" value="F:phosphoglycerate mutase activity"/>
    <property type="evidence" value="ECO:0007669"/>
    <property type="project" value="UniProtKB-EC"/>
</dbReference>
<dbReference type="GO" id="GO:0006094">
    <property type="term" value="P:gluconeogenesis"/>
    <property type="evidence" value="ECO:0007669"/>
    <property type="project" value="UniProtKB-UniRule"/>
</dbReference>
<dbReference type="GO" id="GO:0006096">
    <property type="term" value="P:glycolytic process"/>
    <property type="evidence" value="ECO:0007669"/>
    <property type="project" value="UniProtKB-UniRule"/>
</dbReference>
<dbReference type="CDD" id="cd07067">
    <property type="entry name" value="HP_PGM_like"/>
    <property type="match status" value="1"/>
</dbReference>
<dbReference type="FunFam" id="3.40.50.1240:FF:000003">
    <property type="entry name" value="2,3-bisphosphoglycerate-dependent phosphoglycerate mutase"/>
    <property type="match status" value="1"/>
</dbReference>
<dbReference type="Gene3D" id="3.40.50.1240">
    <property type="entry name" value="Phosphoglycerate mutase-like"/>
    <property type="match status" value="1"/>
</dbReference>
<dbReference type="HAMAP" id="MF_01039">
    <property type="entry name" value="PGAM_GpmA"/>
    <property type="match status" value="1"/>
</dbReference>
<dbReference type="InterPro" id="IPR013078">
    <property type="entry name" value="His_Pase_superF_clade-1"/>
</dbReference>
<dbReference type="InterPro" id="IPR029033">
    <property type="entry name" value="His_PPase_superfam"/>
</dbReference>
<dbReference type="InterPro" id="IPR001345">
    <property type="entry name" value="PG/BPGM_mutase_AS"/>
</dbReference>
<dbReference type="InterPro" id="IPR005952">
    <property type="entry name" value="Phosphogly_mut1"/>
</dbReference>
<dbReference type="NCBIfam" id="TIGR01258">
    <property type="entry name" value="pgm_1"/>
    <property type="match status" value="1"/>
</dbReference>
<dbReference type="NCBIfam" id="NF010713">
    <property type="entry name" value="PRK14115.1"/>
    <property type="match status" value="1"/>
</dbReference>
<dbReference type="NCBIfam" id="NF010718">
    <property type="entry name" value="PRK14120.1"/>
    <property type="match status" value="1"/>
</dbReference>
<dbReference type="PANTHER" id="PTHR11931">
    <property type="entry name" value="PHOSPHOGLYCERATE MUTASE"/>
    <property type="match status" value="1"/>
</dbReference>
<dbReference type="Pfam" id="PF00300">
    <property type="entry name" value="His_Phos_1"/>
    <property type="match status" value="1"/>
</dbReference>
<dbReference type="PIRSF" id="PIRSF000709">
    <property type="entry name" value="6PFK_2-Ptase"/>
    <property type="match status" value="1"/>
</dbReference>
<dbReference type="SMART" id="SM00855">
    <property type="entry name" value="PGAM"/>
    <property type="match status" value="1"/>
</dbReference>
<dbReference type="SUPFAM" id="SSF53254">
    <property type="entry name" value="Phosphoglycerate mutase-like"/>
    <property type="match status" value="1"/>
</dbReference>
<dbReference type="PROSITE" id="PS00175">
    <property type="entry name" value="PG_MUTASE"/>
    <property type="match status" value="1"/>
</dbReference>
<accession>B3QPN8</accession>
<gene>
    <name evidence="1" type="primary">gpmA</name>
    <name type="ordered locus">Cpar_1493</name>
</gene>
<protein>
    <recommendedName>
        <fullName evidence="1">2,3-bisphosphoglycerate-dependent phosphoglycerate mutase</fullName>
        <shortName evidence="1">BPG-dependent PGAM</shortName>
        <shortName evidence="1">PGAM</shortName>
        <shortName evidence="1">Phosphoglyceromutase</shortName>
        <shortName evidence="1">dPGM</shortName>
        <ecNumber evidence="1">5.4.2.11</ecNumber>
    </recommendedName>
</protein>
<comment type="function">
    <text evidence="1">Catalyzes the interconversion of 2-phosphoglycerate and 3-phosphoglycerate.</text>
</comment>
<comment type="catalytic activity">
    <reaction evidence="1">
        <text>(2R)-2-phosphoglycerate = (2R)-3-phosphoglycerate</text>
        <dbReference type="Rhea" id="RHEA:15901"/>
        <dbReference type="ChEBI" id="CHEBI:58272"/>
        <dbReference type="ChEBI" id="CHEBI:58289"/>
        <dbReference type="EC" id="5.4.2.11"/>
    </reaction>
</comment>
<comment type="pathway">
    <text evidence="1">Carbohydrate degradation; glycolysis; pyruvate from D-glyceraldehyde 3-phosphate: step 3/5.</text>
</comment>
<comment type="similarity">
    <text evidence="1">Belongs to the phosphoglycerate mutase family. BPG-dependent PGAM subfamily.</text>
</comment>
<feature type="chain" id="PRO_1000135933" description="2,3-bisphosphoglycerate-dependent phosphoglycerate mutase">
    <location>
        <begin position="1"/>
        <end position="247"/>
    </location>
</feature>
<feature type="active site" description="Tele-phosphohistidine intermediate" evidence="1">
    <location>
        <position position="9"/>
    </location>
</feature>
<feature type="active site" description="Proton donor/acceptor" evidence="1">
    <location>
        <position position="87"/>
    </location>
</feature>
<feature type="binding site" evidence="1">
    <location>
        <begin position="8"/>
        <end position="15"/>
    </location>
    <ligand>
        <name>substrate</name>
    </ligand>
</feature>
<feature type="binding site" evidence="1">
    <location>
        <begin position="21"/>
        <end position="22"/>
    </location>
    <ligand>
        <name>substrate</name>
    </ligand>
</feature>
<feature type="binding site" evidence="1">
    <location>
        <position position="60"/>
    </location>
    <ligand>
        <name>substrate</name>
    </ligand>
</feature>
<feature type="binding site" evidence="1">
    <location>
        <begin position="87"/>
        <end position="90"/>
    </location>
    <ligand>
        <name>substrate</name>
    </ligand>
</feature>
<feature type="binding site" evidence="1">
    <location>
        <position position="98"/>
    </location>
    <ligand>
        <name>substrate</name>
    </ligand>
</feature>
<feature type="binding site" evidence="1">
    <location>
        <begin position="114"/>
        <end position="115"/>
    </location>
    <ligand>
        <name>substrate</name>
    </ligand>
</feature>
<feature type="binding site" evidence="1">
    <location>
        <begin position="183"/>
        <end position="184"/>
    </location>
    <ligand>
        <name>substrate</name>
    </ligand>
</feature>
<feature type="site" description="Transition state stabilizer" evidence="1">
    <location>
        <position position="182"/>
    </location>
</feature>
<reference key="1">
    <citation type="submission" date="2008-06" db="EMBL/GenBank/DDBJ databases">
        <title>Complete sequence of Chlorobaculum parvum NCIB 8327.</title>
        <authorList>
            <consortium name="US DOE Joint Genome Institute"/>
            <person name="Lucas S."/>
            <person name="Copeland A."/>
            <person name="Lapidus A."/>
            <person name="Glavina del Rio T."/>
            <person name="Dalin E."/>
            <person name="Tice H."/>
            <person name="Bruce D."/>
            <person name="Goodwin L."/>
            <person name="Pitluck S."/>
            <person name="Schmutz J."/>
            <person name="Larimer F."/>
            <person name="Land M."/>
            <person name="Hauser L."/>
            <person name="Kyrpides N."/>
            <person name="Mikhailova N."/>
            <person name="Zhao F."/>
            <person name="Li T."/>
            <person name="Liu Z."/>
            <person name="Overmann J."/>
            <person name="Bryant D.A."/>
            <person name="Richardson P."/>
        </authorList>
    </citation>
    <scope>NUCLEOTIDE SEQUENCE [LARGE SCALE GENOMIC DNA]</scope>
    <source>
        <strain>DSM 263 / NCIMB 8327</strain>
    </source>
</reference>
<name>GPMA_CHLP8</name>